<gene>
    <name evidence="1" type="primary">tilS</name>
    <name type="ordered locus">RB7629</name>
</gene>
<accession>Q7UNE1</accession>
<reference key="1">
    <citation type="journal article" date="2003" name="Proc. Natl. Acad. Sci. U.S.A.">
        <title>Complete genome sequence of the marine planctomycete Pirellula sp. strain 1.</title>
        <authorList>
            <person name="Gloeckner F.O."/>
            <person name="Kube M."/>
            <person name="Bauer M."/>
            <person name="Teeling H."/>
            <person name="Lombardot T."/>
            <person name="Ludwig W."/>
            <person name="Gade D."/>
            <person name="Beck A."/>
            <person name="Borzym K."/>
            <person name="Heitmann K."/>
            <person name="Rabus R."/>
            <person name="Schlesner H."/>
            <person name="Amann R."/>
            <person name="Reinhardt R."/>
        </authorList>
    </citation>
    <scope>NUCLEOTIDE SEQUENCE [LARGE SCALE GENOMIC DNA]</scope>
    <source>
        <strain>DSM 10527 / NCIMB 13988 / SH1</strain>
    </source>
</reference>
<proteinExistence type="inferred from homology"/>
<name>TILS_RHOBA</name>
<feature type="chain" id="PRO_0000181754" description="tRNA(Ile)-lysidine synthase">
    <location>
        <begin position="1"/>
        <end position="397"/>
    </location>
</feature>
<feature type="binding site" evidence="1">
    <location>
        <begin position="44"/>
        <end position="49"/>
    </location>
    <ligand>
        <name>ATP</name>
        <dbReference type="ChEBI" id="CHEBI:30616"/>
    </ligand>
</feature>
<protein>
    <recommendedName>
        <fullName evidence="1">tRNA(Ile)-lysidine synthase</fullName>
        <ecNumber evidence="1">6.3.4.19</ecNumber>
    </recommendedName>
    <alternativeName>
        <fullName evidence="1">tRNA(Ile)-2-lysyl-cytidine synthase</fullName>
    </alternativeName>
    <alternativeName>
        <fullName evidence="1">tRNA(Ile)-lysidine synthetase</fullName>
    </alternativeName>
</protein>
<comment type="function">
    <text evidence="1">Ligates lysine onto the cytidine present at position 34 of the AUA codon-specific tRNA(Ile) that contains the anticodon CAU, in an ATP-dependent manner. Cytidine is converted to lysidine, thus changing the amino acid specificity of the tRNA from methionine to isoleucine.</text>
</comment>
<comment type="catalytic activity">
    <reaction evidence="1">
        <text>cytidine(34) in tRNA(Ile2) + L-lysine + ATP = lysidine(34) in tRNA(Ile2) + AMP + diphosphate + H(+)</text>
        <dbReference type="Rhea" id="RHEA:43744"/>
        <dbReference type="Rhea" id="RHEA-COMP:10625"/>
        <dbReference type="Rhea" id="RHEA-COMP:10670"/>
        <dbReference type="ChEBI" id="CHEBI:15378"/>
        <dbReference type="ChEBI" id="CHEBI:30616"/>
        <dbReference type="ChEBI" id="CHEBI:32551"/>
        <dbReference type="ChEBI" id="CHEBI:33019"/>
        <dbReference type="ChEBI" id="CHEBI:82748"/>
        <dbReference type="ChEBI" id="CHEBI:83665"/>
        <dbReference type="ChEBI" id="CHEBI:456215"/>
        <dbReference type="EC" id="6.3.4.19"/>
    </reaction>
</comment>
<comment type="subcellular location">
    <subcellularLocation>
        <location evidence="1">Cytoplasm</location>
    </subcellularLocation>
</comment>
<comment type="domain">
    <text>The N-terminal region contains the highly conserved SGGXDS motif, predicted to be a P-loop motif involved in ATP binding.</text>
</comment>
<comment type="similarity">
    <text evidence="1">Belongs to the tRNA(Ile)-lysidine synthase family.</text>
</comment>
<evidence type="ECO:0000255" key="1">
    <source>
        <dbReference type="HAMAP-Rule" id="MF_01161"/>
    </source>
</evidence>
<sequence length="397" mass="44519">MIGDVLPTTPNESPNWHRLRRAIRSTWPNRHGRSSDVATLVGCSGGADSVALICLLAELWAEESNGLNPANETVTKPVAPLVVAHCNHGLRGEESNADEAFVRQICDQLQLPLVIHHVPPLNNSATSGPVSDERTLRQIRRDFFERAAKQHGCRYVAVAHSADDQAETMLHHFIRGTGPLGLAGIAEASELDTDIVVRRPLLQVRRDTLRDGLREIGQPWREDASNRHTIYTRNWIRHDVLPLIESRYPNAVEAIHRAGTLQHEMNEMVRRLAERWLEAFTDFSGDRWTIHTERLSKSATPEKRMDDTNAACSWMIERPVIVAASQLAWDRLGWSRGSMTMQHWQRLTGLINDQSCWHTSDIDVSTSQAVDGIDHGGHFPGGICLSVEAKQLVLRSE</sequence>
<dbReference type="EC" id="6.3.4.19" evidence="1"/>
<dbReference type="EMBL" id="BX294146">
    <property type="protein sequence ID" value="CAD75478.1"/>
    <property type="molecule type" value="Genomic_DNA"/>
</dbReference>
<dbReference type="RefSeq" id="NP_867931.1">
    <property type="nucleotide sequence ID" value="NC_005027.1"/>
</dbReference>
<dbReference type="SMR" id="Q7UNE1"/>
<dbReference type="STRING" id="243090.RB7629"/>
<dbReference type="EnsemblBacteria" id="CAD75478">
    <property type="protein sequence ID" value="CAD75478"/>
    <property type="gene ID" value="RB7629"/>
</dbReference>
<dbReference type="KEGG" id="rba:RB7629"/>
<dbReference type="PATRIC" id="fig|243090.15.peg.3687"/>
<dbReference type="eggNOG" id="COG0037">
    <property type="taxonomic scope" value="Bacteria"/>
</dbReference>
<dbReference type="HOGENOM" id="CLU_018869_0_0_0"/>
<dbReference type="InParanoid" id="Q7UNE1"/>
<dbReference type="OrthoDB" id="9807403at2"/>
<dbReference type="Proteomes" id="UP000001025">
    <property type="component" value="Chromosome"/>
</dbReference>
<dbReference type="GO" id="GO:0005737">
    <property type="term" value="C:cytoplasm"/>
    <property type="evidence" value="ECO:0007669"/>
    <property type="project" value="UniProtKB-SubCell"/>
</dbReference>
<dbReference type="GO" id="GO:0005524">
    <property type="term" value="F:ATP binding"/>
    <property type="evidence" value="ECO:0007669"/>
    <property type="project" value="UniProtKB-UniRule"/>
</dbReference>
<dbReference type="GO" id="GO:0032267">
    <property type="term" value="F:tRNA(Ile)-lysidine synthase activity"/>
    <property type="evidence" value="ECO:0007669"/>
    <property type="project" value="UniProtKB-EC"/>
</dbReference>
<dbReference type="GO" id="GO:0006400">
    <property type="term" value="P:tRNA modification"/>
    <property type="evidence" value="ECO:0007669"/>
    <property type="project" value="UniProtKB-UniRule"/>
</dbReference>
<dbReference type="CDD" id="cd01992">
    <property type="entry name" value="TilS_N"/>
    <property type="match status" value="1"/>
</dbReference>
<dbReference type="Gene3D" id="3.40.50.620">
    <property type="entry name" value="HUPs"/>
    <property type="match status" value="1"/>
</dbReference>
<dbReference type="HAMAP" id="MF_01161">
    <property type="entry name" value="tRNA_Ile_lys_synt"/>
    <property type="match status" value="1"/>
</dbReference>
<dbReference type="InterPro" id="IPR014729">
    <property type="entry name" value="Rossmann-like_a/b/a_fold"/>
</dbReference>
<dbReference type="InterPro" id="IPR011063">
    <property type="entry name" value="TilS/TtcA_N"/>
</dbReference>
<dbReference type="InterPro" id="IPR012094">
    <property type="entry name" value="tRNA_Ile_lys_synt"/>
</dbReference>
<dbReference type="InterPro" id="IPR012795">
    <property type="entry name" value="tRNA_Ile_lys_synt_N"/>
</dbReference>
<dbReference type="NCBIfam" id="TIGR02432">
    <property type="entry name" value="lysidine_TilS_N"/>
    <property type="match status" value="1"/>
</dbReference>
<dbReference type="PANTHER" id="PTHR43033">
    <property type="entry name" value="TRNA(ILE)-LYSIDINE SYNTHASE-RELATED"/>
    <property type="match status" value="1"/>
</dbReference>
<dbReference type="PANTHER" id="PTHR43033:SF1">
    <property type="entry name" value="TRNA(ILE)-LYSIDINE SYNTHASE-RELATED"/>
    <property type="match status" value="1"/>
</dbReference>
<dbReference type="Pfam" id="PF01171">
    <property type="entry name" value="ATP_bind_3"/>
    <property type="match status" value="1"/>
</dbReference>
<dbReference type="SUPFAM" id="SSF52402">
    <property type="entry name" value="Adenine nucleotide alpha hydrolases-like"/>
    <property type="match status" value="1"/>
</dbReference>
<organism>
    <name type="scientific">Rhodopirellula baltica (strain DSM 10527 / NCIMB 13988 / SH1)</name>
    <dbReference type="NCBI Taxonomy" id="243090"/>
    <lineage>
        <taxon>Bacteria</taxon>
        <taxon>Pseudomonadati</taxon>
        <taxon>Planctomycetota</taxon>
        <taxon>Planctomycetia</taxon>
        <taxon>Pirellulales</taxon>
        <taxon>Pirellulaceae</taxon>
        <taxon>Rhodopirellula</taxon>
    </lineage>
</organism>
<keyword id="KW-0067">ATP-binding</keyword>
<keyword id="KW-0963">Cytoplasm</keyword>
<keyword id="KW-0436">Ligase</keyword>
<keyword id="KW-0547">Nucleotide-binding</keyword>
<keyword id="KW-1185">Reference proteome</keyword>
<keyword id="KW-0819">tRNA processing</keyword>